<sequence>MVLKVISANQAVAEAAKLAKPKVIPVYPITPQTSISEYLAKFVADGELKAEYIRVESEHSAMSACVGASGAGVRVFTATSSQGLALMHEIVYAAAGLRNPIVMANANRALSAPLSIWNDQQDSIAERDSGWMQIYVESGQEALDSVLLSYRVSEDRDVLLPSMVCLDGFILTHTVEPVDIPSQEDVDSFLPEFQPQVMLDPDEPMSLGTFTDPDYYMEARYEVEKAMERSRKIIERACREFSEMFGREYGLVEEYRCEDAEIILVAMGSVCSTLREVIDELRDKGKAVGLLKVRVHRPFPAEEIKSAVRNASKVAVLDKNITFSVGGALYTEISALLRDREVYGFIVGLGGRDITPAHIEEIVRRTENPERSVTWIGLKEESE</sequence>
<reference key="1">
    <citation type="journal article" date="1997" name="J. Bacteriol.">
        <title>Complete genome sequence of Methanobacterium thermoautotrophicum deltaH: functional analysis and comparative genomics.</title>
        <authorList>
            <person name="Smith D.R."/>
            <person name="Doucette-Stamm L.A."/>
            <person name="Deloughery C."/>
            <person name="Lee H.-M."/>
            <person name="Dubois J."/>
            <person name="Aldredge T."/>
            <person name="Bashirzadeh R."/>
            <person name="Blakely D."/>
            <person name="Cook R."/>
            <person name="Gilbert K."/>
            <person name="Harrison D."/>
            <person name="Hoang L."/>
            <person name="Keagle P."/>
            <person name="Lumm W."/>
            <person name="Pothier B."/>
            <person name="Qiu D."/>
            <person name="Spadafora R."/>
            <person name="Vicare R."/>
            <person name="Wang Y."/>
            <person name="Wierzbowski J."/>
            <person name="Gibson R."/>
            <person name="Jiwani N."/>
            <person name="Caruso A."/>
            <person name="Bush D."/>
            <person name="Safer H."/>
            <person name="Patwell D."/>
            <person name="Prabhakar S."/>
            <person name="McDougall S."/>
            <person name="Shimer G."/>
            <person name="Goyal A."/>
            <person name="Pietrovski S."/>
            <person name="Church G.M."/>
            <person name="Daniels C.J."/>
            <person name="Mao J.-I."/>
            <person name="Rice P."/>
            <person name="Noelling J."/>
            <person name="Reeve J.N."/>
        </authorList>
    </citation>
    <scope>NUCLEOTIDE SEQUENCE [LARGE SCALE GENOMIC DNA]</scope>
    <source>
        <strain>ATCC 29096 / DSM 1053 / JCM 10044 / NBRC 100330 / Delta H</strain>
    </source>
</reference>
<gene>
    <name type="primary">porA</name>
    <name type="ordered locus">MTH_1739</name>
</gene>
<feature type="initiator methionine" description="Removed" evidence="1">
    <location>
        <position position="1"/>
    </location>
</feature>
<feature type="chain" id="PRO_0000099897" description="Pyruvate synthase subunit PorA">
    <location>
        <begin position="2"/>
        <end position="383"/>
    </location>
</feature>
<accession>P56810</accession>
<comment type="catalytic activity">
    <reaction>
        <text>2 oxidized [2Fe-2S]-[ferredoxin] + pyruvate + CoA = 2 reduced [2Fe-2S]-[ferredoxin] + acetyl-CoA + CO2 + H(+)</text>
        <dbReference type="Rhea" id="RHEA:12765"/>
        <dbReference type="Rhea" id="RHEA-COMP:10000"/>
        <dbReference type="Rhea" id="RHEA-COMP:10001"/>
        <dbReference type="ChEBI" id="CHEBI:15361"/>
        <dbReference type="ChEBI" id="CHEBI:15378"/>
        <dbReference type="ChEBI" id="CHEBI:16526"/>
        <dbReference type="ChEBI" id="CHEBI:33737"/>
        <dbReference type="ChEBI" id="CHEBI:33738"/>
        <dbReference type="ChEBI" id="CHEBI:57287"/>
        <dbReference type="ChEBI" id="CHEBI:57288"/>
        <dbReference type="EC" id="1.2.7.1"/>
    </reaction>
</comment>
<comment type="subunit">
    <text>Heterotetramer of one alpha, one beta, one delta and one gamma chain.</text>
</comment>
<proteinExistence type="inferred from homology"/>
<name>PORA_METTH</name>
<protein>
    <recommendedName>
        <fullName>Pyruvate synthase subunit PorA</fullName>
        <ecNumber>1.2.7.1</ecNumber>
    </recommendedName>
    <alternativeName>
        <fullName>Pyruvate oxidoreductase alpha chain</fullName>
        <shortName>POR</shortName>
    </alternativeName>
    <alternativeName>
        <fullName>Pyruvic-ferredoxin oxidoreductase subunit alpha</fullName>
    </alternativeName>
</protein>
<organism>
    <name type="scientific">Methanothermobacter thermautotrophicus (strain ATCC 29096 / DSM 1053 / JCM 10044 / NBRC 100330 / Delta H)</name>
    <name type="common">Methanobacterium thermoautotrophicum</name>
    <dbReference type="NCBI Taxonomy" id="187420"/>
    <lineage>
        <taxon>Archaea</taxon>
        <taxon>Methanobacteriati</taxon>
        <taxon>Methanobacteriota</taxon>
        <taxon>Methanomada group</taxon>
        <taxon>Methanobacteria</taxon>
        <taxon>Methanobacteriales</taxon>
        <taxon>Methanobacteriaceae</taxon>
        <taxon>Methanothermobacter</taxon>
    </lineage>
</organism>
<evidence type="ECO:0000250" key="1"/>
<dbReference type="EC" id="1.2.7.1"/>
<dbReference type="EMBL" id="AE000666">
    <property type="protein sequence ID" value="AAB86209.1"/>
    <property type="molecule type" value="Genomic_DNA"/>
</dbReference>
<dbReference type="PIR" id="E69099">
    <property type="entry name" value="E69099"/>
</dbReference>
<dbReference type="RefSeq" id="WP_010877345.1">
    <property type="nucleotide sequence ID" value="NC_000916.1"/>
</dbReference>
<dbReference type="SMR" id="P56810"/>
<dbReference type="FunCoup" id="P56810">
    <property type="interactions" value="69"/>
</dbReference>
<dbReference type="STRING" id="187420.MTH_1739"/>
<dbReference type="PaxDb" id="187420-MTH_1739"/>
<dbReference type="EnsemblBacteria" id="AAB86209">
    <property type="protein sequence ID" value="AAB86209"/>
    <property type="gene ID" value="MTH_1739"/>
</dbReference>
<dbReference type="GeneID" id="1470824"/>
<dbReference type="GeneID" id="77402257"/>
<dbReference type="KEGG" id="mth:MTH_1739"/>
<dbReference type="PATRIC" id="fig|187420.15.peg.1698"/>
<dbReference type="HOGENOM" id="CLU_002569_5_0_2"/>
<dbReference type="InParanoid" id="P56810"/>
<dbReference type="BioCyc" id="MetaCyc:MONOMER-14529"/>
<dbReference type="Proteomes" id="UP000005223">
    <property type="component" value="Chromosome"/>
</dbReference>
<dbReference type="GO" id="GO:0019164">
    <property type="term" value="F:pyruvate synthase activity"/>
    <property type="evidence" value="ECO:0007669"/>
    <property type="project" value="UniProtKB-EC"/>
</dbReference>
<dbReference type="GO" id="GO:0006979">
    <property type="term" value="P:response to oxidative stress"/>
    <property type="evidence" value="ECO:0007669"/>
    <property type="project" value="TreeGrafter"/>
</dbReference>
<dbReference type="CDD" id="cd07034">
    <property type="entry name" value="TPP_PYR_PFOR_IOR-alpha_like"/>
    <property type="match status" value="1"/>
</dbReference>
<dbReference type="FunFam" id="3.40.50.920:FF:000010">
    <property type="entry name" value="Pyruvate ferredoxin oxidoreductase, alpha subunit"/>
    <property type="match status" value="1"/>
</dbReference>
<dbReference type="FunFam" id="3.40.50.970:FF:000012">
    <property type="entry name" value="Pyruvate:ferredoxin (Flavodoxin) oxidoreductase"/>
    <property type="match status" value="1"/>
</dbReference>
<dbReference type="Gene3D" id="3.40.50.920">
    <property type="match status" value="1"/>
</dbReference>
<dbReference type="Gene3D" id="3.40.50.970">
    <property type="match status" value="1"/>
</dbReference>
<dbReference type="InterPro" id="IPR033412">
    <property type="entry name" value="PFOR_II"/>
</dbReference>
<dbReference type="InterPro" id="IPR050722">
    <property type="entry name" value="Pyruvate:ferred/Flavod_OxRd"/>
</dbReference>
<dbReference type="InterPro" id="IPR053390">
    <property type="entry name" value="Pyruvate_synthase_PorA"/>
</dbReference>
<dbReference type="InterPro" id="IPR002880">
    <property type="entry name" value="Pyrv_Fd/Flavodoxin_OxRdtase_N"/>
</dbReference>
<dbReference type="InterPro" id="IPR029061">
    <property type="entry name" value="THDP-binding"/>
</dbReference>
<dbReference type="InterPro" id="IPR009014">
    <property type="entry name" value="Transketo_C/PFOR_II"/>
</dbReference>
<dbReference type="NCBIfam" id="NF040682">
    <property type="entry name" value="PorA_Arch"/>
    <property type="match status" value="1"/>
</dbReference>
<dbReference type="PANTHER" id="PTHR32154">
    <property type="entry name" value="PYRUVATE-FLAVODOXIN OXIDOREDUCTASE-RELATED"/>
    <property type="match status" value="1"/>
</dbReference>
<dbReference type="PANTHER" id="PTHR32154:SF0">
    <property type="entry name" value="PYRUVATE-FLAVODOXIN OXIDOREDUCTASE-RELATED"/>
    <property type="match status" value="1"/>
</dbReference>
<dbReference type="Pfam" id="PF17147">
    <property type="entry name" value="PFOR_II"/>
    <property type="match status" value="1"/>
</dbReference>
<dbReference type="Pfam" id="PF01855">
    <property type="entry name" value="POR_N"/>
    <property type="match status" value="1"/>
</dbReference>
<dbReference type="SUPFAM" id="SSF52518">
    <property type="entry name" value="Thiamin diphosphate-binding fold (THDP-binding)"/>
    <property type="match status" value="1"/>
</dbReference>
<dbReference type="SUPFAM" id="SSF52922">
    <property type="entry name" value="TK C-terminal domain-like"/>
    <property type="match status" value="1"/>
</dbReference>
<keyword id="KW-0560">Oxidoreductase</keyword>
<keyword id="KW-1185">Reference proteome</keyword>